<protein>
    <recommendedName>
        <fullName evidence="1">Iron-sulfur cluster assembly protein CyaY</fullName>
    </recommendedName>
</protein>
<organism>
    <name type="scientific">Polaromonas sp. (strain JS666 / ATCC BAA-500)</name>
    <dbReference type="NCBI Taxonomy" id="296591"/>
    <lineage>
        <taxon>Bacteria</taxon>
        <taxon>Pseudomonadati</taxon>
        <taxon>Pseudomonadota</taxon>
        <taxon>Betaproteobacteria</taxon>
        <taxon>Burkholderiales</taxon>
        <taxon>Comamonadaceae</taxon>
        <taxon>Polaromonas</taxon>
    </lineage>
</organism>
<evidence type="ECO:0000255" key="1">
    <source>
        <dbReference type="HAMAP-Rule" id="MF_00142"/>
    </source>
</evidence>
<gene>
    <name evidence="1" type="primary">cyaY</name>
    <name type="ordered locus">Bpro_0779</name>
</gene>
<reference key="1">
    <citation type="journal article" date="2008" name="Appl. Environ. Microbiol.">
        <title>The genome of Polaromonas sp. strain JS666: insights into the evolution of a hydrocarbon- and xenobiotic-degrading bacterium, and features of relevance to biotechnology.</title>
        <authorList>
            <person name="Mattes T.E."/>
            <person name="Alexander A.K."/>
            <person name="Richardson P.M."/>
            <person name="Munk A.C."/>
            <person name="Han C.S."/>
            <person name="Stothard P."/>
            <person name="Coleman N.V."/>
        </authorList>
    </citation>
    <scope>NUCLEOTIDE SEQUENCE [LARGE SCALE GENOMIC DNA]</scope>
    <source>
        <strain>JS666 / ATCC BAA-500</strain>
    </source>
</reference>
<dbReference type="EMBL" id="CP000316">
    <property type="protein sequence ID" value="ABE42735.1"/>
    <property type="molecule type" value="Genomic_DNA"/>
</dbReference>
<dbReference type="RefSeq" id="WP_011481738.1">
    <property type="nucleotide sequence ID" value="NC_007948.1"/>
</dbReference>
<dbReference type="SMR" id="Q12FF7"/>
<dbReference type="STRING" id="296591.Bpro_0779"/>
<dbReference type="KEGG" id="pol:Bpro_0779"/>
<dbReference type="eggNOG" id="COG1965">
    <property type="taxonomic scope" value="Bacteria"/>
</dbReference>
<dbReference type="HOGENOM" id="CLU_080880_3_0_4"/>
<dbReference type="OrthoDB" id="285675at2"/>
<dbReference type="Proteomes" id="UP000001983">
    <property type="component" value="Chromosome"/>
</dbReference>
<dbReference type="GO" id="GO:0005829">
    <property type="term" value="C:cytosol"/>
    <property type="evidence" value="ECO:0007669"/>
    <property type="project" value="TreeGrafter"/>
</dbReference>
<dbReference type="GO" id="GO:0008199">
    <property type="term" value="F:ferric iron binding"/>
    <property type="evidence" value="ECO:0007669"/>
    <property type="project" value="InterPro"/>
</dbReference>
<dbReference type="GO" id="GO:0008198">
    <property type="term" value="F:ferrous iron binding"/>
    <property type="evidence" value="ECO:0007669"/>
    <property type="project" value="TreeGrafter"/>
</dbReference>
<dbReference type="GO" id="GO:0016226">
    <property type="term" value="P:iron-sulfur cluster assembly"/>
    <property type="evidence" value="ECO:0007669"/>
    <property type="project" value="UniProtKB-UniRule"/>
</dbReference>
<dbReference type="Gene3D" id="3.30.920.10">
    <property type="entry name" value="Frataxin/CyaY"/>
    <property type="match status" value="1"/>
</dbReference>
<dbReference type="HAMAP" id="MF_00142">
    <property type="entry name" value="CyaY"/>
    <property type="match status" value="1"/>
</dbReference>
<dbReference type="InterPro" id="IPR047584">
    <property type="entry name" value="CyaY"/>
</dbReference>
<dbReference type="InterPro" id="IPR002908">
    <property type="entry name" value="Frataxin/CyaY"/>
</dbReference>
<dbReference type="InterPro" id="IPR036524">
    <property type="entry name" value="Frataxin/CyaY_sf"/>
</dbReference>
<dbReference type="InterPro" id="IPR020895">
    <property type="entry name" value="Frataxin_CS"/>
</dbReference>
<dbReference type="NCBIfam" id="TIGR03421">
    <property type="entry name" value="FeS_CyaY"/>
    <property type="match status" value="1"/>
</dbReference>
<dbReference type="PANTHER" id="PTHR16821">
    <property type="entry name" value="FRATAXIN"/>
    <property type="match status" value="1"/>
</dbReference>
<dbReference type="PANTHER" id="PTHR16821:SF2">
    <property type="entry name" value="FRATAXIN, MITOCHONDRIAL"/>
    <property type="match status" value="1"/>
</dbReference>
<dbReference type="Pfam" id="PF01491">
    <property type="entry name" value="Frataxin_Cyay"/>
    <property type="match status" value="1"/>
</dbReference>
<dbReference type="SMART" id="SM01219">
    <property type="entry name" value="Frataxin_Cyay"/>
    <property type="match status" value="1"/>
</dbReference>
<dbReference type="SUPFAM" id="SSF55387">
    <property type="entry name" value="Frataxin/Nqo15-like"/>
    <property type="match status" value="1"/>
</dbReference>
<dbReference type="PROSITE" id="PS01344">
    <property type="entry name" value="FRATAXIN_1"/>
    <property type="match status" value="1"/>
</dbReference>
<dbReference type="PROSITE" id="PS50810">
    <property type="entry name" value="FRATAXIN_2"/>
    <property type="match status" value="1"/>
</dbReference>
<accession>Q12FF7</accession>
<name>CYAY_POLSJ</name>
<sequence>MTDLEYQDLAESALTAIETACDRINDETDADIDNQRTGGMITLTFSNRSQIIINLQKPLQEIWMAAKAGGFHYKFRGNQWLDTKDSSEFFTGLSRYASEQAGQPLVFNAPVPVTGK</sequence>
<proteinExistence type="inferred from homology"/>
<comment type="function">
    <text evidence="1">Involved in iron-sulfur (Fe-S) cluster assembly. May act as a regulator of Fe-S biogenesis.</text>
</comment>
<comment type="similarity">
    <text evidence="1">Belongs to the frataxin family.</text>
</comment>
<feature type="chain" id="PRO_1000010936" description="Iron-sulfur cluster assembly protein CyaY">
    <location>
        <begin position="1"/>
        <end position="116"/>
    </location>
</feature>
<keyword id="KW-0408">Iron</keyword>
<keyword id="KW-0479">Metal-binding</keyword>
<keyword id="KW-1185">Reference proteome</keyword>